<keyword id="KW-0560">Oxidoreductase</keyword>
<keyword id="KW-1185">Reference proteome</keyword>
<keyword id="KW-0819">tRNA processing</keyword>
<accession>A8H5K7</accession>
<protein>
    <recommendedName>
        <fullName evidence="1">tRNA uridine(34) hydroxylase</fullName>
        <ecNumber evidence="1">1.14.-.-</ecNumber>
    </recommendedName>
    <alternativeName>
        <fullName evidence="1">tRNA hydroxylation protein O</fullName>
    </alternativeName>
</protein>
<evidence type="ECO:0000255" key="1">
    <source>
        <dbReference type="HAMAP-Rule" id="MF_00469"/>
    </source>
</evidence>
<proteinExistence type="inferred from homology"/>
<name>TRHO_SHEPA</name>
<reference key="1">
    <citation type="submission" date="2007-10" db="EMBL/GenBank/DDBJ databases">
        <title>Complete sequence of Shewanella pealeana ATCC 700345.</title>
        <authorList>
            <consortium name="US DOE Joint Genome Institute"/>
            <person name="Copeland A."/>
            <person name="Lucas S."/>
            <person name="Lapidus A."/>
            <person name="Barry K."/>
            <person name="Glavina del Rio T."/>
            <person name="Dalin E."/>
            <person name="Tice H."/>
            <person name="Pitluck S."/>
            <person name="Chertkov O."/>
            <person name="Brettin T."/>
            <person name="Bruce D."/>
            <person name="Detter J.C."/>
            <person name="Han C."/>
            <person name="Schmutz J."/>
            <person name="Larimer F."/>
            <person name="Land M."/>
            <person name="Hauser L."/>
            <person name="Kyrpides N."/>
            <person name="Kim E."/>
            <person name="Zhao J.-S.Z."/>
            <person name="Manno D."/>
            <person name="Hawari J."/>
            <person name="Richardson P."/>
        </authorList>
    </citation>
    <scope>NUCLEOTIDE SEQUENCE [LARGE SCALE GENOMIC DNA]</scope>
    <source>
        <strain>ATCC 700345 / ANG-SQ1</strain>
    </source>
</reference>
<gene>
    <name evidence="1" type="primary">trhO</name>
    <name type="ordered locus">Spea_2524</name>
</gene>
<sequence>MSKVVVCAMYKFVTLAEFEKLQSPLQKVMETSGVKGSLLLAQEGINGTVAGSQSAIDNLLAWLATQPGLDNIVYKLSFDDVMPFYRTKVKLKKEIVTMGVEGIDPKKVVGTYVKPKDWNQLISDPEVLLVDTRNDYEVQIGTFKDALDPKTKTFREFPDYVKQNLDPAKHKKVAMFCTGGIRCEKSTAYLKEQGFDEVFHLEGGILKYLEEVKLEESLWQGECFVFDNRVAVDHNLEKGQYAQCNACRMPITADEMALDSFVQGVSCLHCIDNISEKQRQRFIERERQVQLSKLRGEAHIGSDVSQVIQTRRAKKDRLKKAQHDKSA</sequence>
<comment type="function">
    <text evidence="1">Catalyzes oxygen-dependent 5-hydroxyuridine (ho5U) modification at position 34 in tRNAs.</text>
</comment>
<comment type="catalytic activity">
    <reaction evidence="1">
        <text>uridine(34) in tRNA + AH2 + O2 = 5-hydroxyuridine(34) in tRNA + A + H2O</text>
        <dbReference type="Rhea" id="RHEA:64224"/>
        <dbReference type="Rhea" id="RHEA-COMP:11727"/>
        <dbReference type="Rhea" id="RHEA-COMP:13381"/>
        <dbReference type="ChEBI" id="CHEBI:13193"/>
        <dbReference type="ChEBI" id="CHEBI:15377"/>
        <dbReference type="ChEBI" id="CHEBI:15379"/>
        <dbReference type="ChEBI" id="CHEBI:17499"/>
        <dbReference type="ChEBI" id="CHEBI:65315"/>
        <dbReference type="ChEBI" id="CHEBI:136877"/>
    </reaction>
</comment>
<comment type="similarity">
    <text evidence="1">Belongs to the TrhO family.</text>
</comment>
<dbReference type="EC" id="1.14.-.-" evidence="1"/>
<dbReference type="EMBL" id="CP000851">
    <property type="protein sequence ID" value="ABV87844.1"/>
    <property type="molecule type" value="Genomic_DNA"/>
</dbReference>
<dbReference type="RefSeq" id="WP_012155752.1">
    <property type="nucleotide sequence ID" value="NC_009901.1"/>
</dbReference>
<dbReference type="SMR" id="A8H5K7"/>
<dbReference type="STRING" id="398579.Spea_2524"/>
<dbReference type="KEGG" id="spl:Spea_2524"/>
<dbReference type="eggNOG" id="COG1054">
    <property type="taxonomic scope" value="Bacteria"/>
</dbReference>
<dbReference type="HOGENOM" id="CLU_038878_0_0_6"/>
<dbReference type="OrthoDB" id="9778326at2"/>
<dbReference type="Proteomes" id="UP000002608">
    <property type="component" value="Chromosome"/>
</dbReference>
<dbReference type="GO" id="GO:0016705">
    <property type="term" value="F:oxidoreductase activity, acting on paired donors, with incorporation or reduction of molecular oxygen"/>
    <property type="evidence" value="ECO:0007669"/>
    <property type="project" value="UniProtKB-UniRule"/>
</dbReference>
<dbReference type="GO" id="GO:0006400">
    <property type="term" value="P:tRNA modification"/>
    <property type="evidence" value="ECO:0007669"/>
    <property type="project" value="UniProtKB-UniRule"/>
</dbReference>
<dbReference type="CDD" id="cd01518">
    <property type="entry name" value="RHOD_YceA"/>
    <property type="match status" value="1"/>
</dbReference>
<dbReference type="Gene3D" id="3.30.70.100">
    <property type="match status" value="1"/>
</dbReference>
<dbReference type="Gene3D" id="3.40.250.10">
    <property type="entry name" value="Rhodanese-like domain"/>
    <property type="match status" value="1"/>
</dbReference>
<dbReference type="HAMAP" id="MF_00469">
    <property type="entry name" value="TrhO"/>
    <property type="match status" value="1"/>
</dbReference>
<dbReference type="InterPro" id="IPR001763">
    <property type="entry name" value="Rhodanese-like_dom"/>
</dbReference>
<dbReference type="InterPro" id="IPR036873">
    <property type="entry name" value="Rhodanese-like_dom_sf"/>
</dbReference>
<dbReference type="InterPro" id="IPR020936">
    <property type="entry name" value="TrhO"/>
</dbReference>
<dbReference type="InterPro" id="IPR040503">
    <property type="entry name" value="TRHO_N"/>
</dbReference>
<dbReference type="NCBIfam" id="NF001136">
    <property type="entry name" value="PRK00142.1-4"/>
    <property type="match status" value="1"/>
</dbReference>
<dbReference type="PANTHER" id="PTHR43268:SF3">
    <property type="entry name" value="RHODANESE-LIKE DOMAIN-CONTAINING PROTEIN 7-RELATED"/>
    <property type="match status" value="1"/>
</dbReference>
<dbReference type="PANTHER" id="PTHR43268">
    <property type="entry name" value="THIOSULFATE SULFURTRANSFERASE/RHODANESE-LIKE DOMAIN-CONTAINING PROTEIN 2"/>
    <property type="match status" value="1"/>
</dbReference>
<dbReference type="Pfam" id="PF00581">
    <property type="entry name" value="Rhodanese"/>
    <property type="match status" value="1"/>
</dbReference>
<dbReference type="Pfam" id="PF17773">
    <property type="entry name" value="UPF0176_N"/>
    <property type="match status" value="1"/>
</dbReference>
<dbReference type="SMART" id="SM00450">
    <property type="entry name" value="RHOD"/>
    <property type="match status" value="1"/>
</dbReference>
<dbReference type="SUPFAM" id="SSF52821">
    <property type="entry name" value="Rhodanese/Cell cycle control phosphatase"/>
    <property type="match status" value="1"/>
</dbReference>
<dbReference type="PROSITE" id="PS50206">
    <property type="entry name" value="RHODANESE_3"/>
    <property type="match status" value="1"/>
</dbReference>
<feature type="chain" id="PRO_1000081197" description="tRNA uridine(34) hydroxylase">
    <location>
        <begin position="1"/>
        <end position="327"/>
    </location>
</feature>
<feature type="domain" description="Rhodanese" evidence="1">
    <location>
        <begin position="123"/>
        <end position="217"/>
    </location>
</feature>
<feature type="active site" description="Cysteine persulfide intermediate" evidence="1">
    <location>
        <position position="177"/>
    </location>
</feature>
<organism>
    <name type="scientific">Shewanella pealeana (strain ATCC 700345 / ANG-SQ1)</name>
    <dbReference type="NCBI Taxonomy" id="398579"/>
    <lineage>
        <taxon>Bacteria</taxon>
        <taxon>Pseudomonadati</taxon>
        <taxon>Pseudomonadota</taxon>
        <taxon>Gammaproteobacteria</taxon>
        <taxon>Alteromonadales</taxon>
        <taxon>Shewanellaceae</taxon>
        <taxon>Shewanella</taxon>
    </lineage>
</organism>